<keyword id="KW-0131">Cell cycle</keyword>
<keyword id="KW-0132">Cell division</keyword>
<keyword id="KW-0133">Cell shape</keyword>
<keyword id="KW-0961">Cell wall biogenesis/degradation</keyword>
<keyword id="KW-0963">Cytoplasm</keyword>
<keyword id="KW-0573">Peptidoglycan synthesis</keyword>
<keyword id="KW-0670">Pyruvate</keyword>
<keyword id="KW-1185">Reference proteome</keyword>
<keyword id="KW-0808">Transferase</keyword>
<feature type="chain" id="PRO_1000023019" description="UDP-N-acetylglucosamine 1-carboxyvinyltransferase">
    <location>
        <begin position="1"/>
        <end position="422"/>
    </location>
</feature>
<feature type="active site" description="Proton donor" evidence="1">
    <location>
        <position position="119"/>
    </location>
</feature>
<feature type="binding site" evidence="1">
    <location>
        <begin position="22"/>
        <end position="23"/>
    </location>
    <ligand>
        <name>phosphoenolpyruvate</name>
        <dbReference type="ChEBI" id="CHEBI:58702"/>
    </ligand>
</feature>
<feature type="binding site" evidence="1">
    <location>
        <position position="95"/>
    </location>
    <ligand>
        <name>UDP-N-acetyl-alpha-D-glucosamine</name>
        <dbReference type="ChEBI" id="CHEBI:57705"/>
    </ligand>
</feature>
<feature type="binding site" evidence="1">
    <location>
        <begin position="124"/>
        <end position="128"/>
    </location>
    <ligand>
        <name>UDP-N-acetyl-alpha-D-glucosamine</name>
        <dbReference type="ChEBI" id="CHEBI:57705"/>
    </ligand>
</feature>
<feature type="binding site" evidence="1">
    <location>
        <position position="309"/>
    </location>
    <ligand>
        <name>UDP-N-acetyl-alpha-D-glucosamine</name>
        <dbReference type="ChEBI" id="CHEBI:57705"/>
    </ligand>
</feature>
<feature type="binding site" evidence="1">
    <location>
        <position position="331"/>
    </location>
    <ligand>
        <name>UDP-N-acetyl-alpha-D-glucosamine</name>
        <dbReference type="ChEBI" id="CHEBI:57705"/>
    </ligand>
</feature>
<feature type="modified residue" description="2-(S-cysteinyl)pyruvic acid O-phosphothioketal" evidence="1">
    <location>
        <position position="119"/>
    </location>
</feature>
<dbReference type="EC" id="2.5.1.7" evidence="1"/>
<dbReference type="EMBL" id="CP000769">
    <property type="protein sequence ID" value="ABS28393.1"/>
    <property type="molecule type" value="Genomic_DNA"/>
</dbReference>
<dbReference type="RefSeq" id="WP_012099036.1">
    <property type="nucleotide sequence ID" value="NC_009675.1"/>
</dbReference>
<dbReference type="SMR" id="A7HI47"/>
<dbReference type="STRING" id="404589.Anae109_4215"/>
<dbReference type="KEGG" id="afw:Anae109_4215"/>
<dbReference type="eggNOG" id="COG0766">
    <property type="taxonomic scope" value="Bacteria"/>
</dbReference>
<dbReference type="HOGENOM" id="CLU_027387_0_0_7"/>
<dbReference type="OrthoDB" id="9803760at2"/>
<dbReference type="UniPathway" id="UPA00219"/>
<dbReference type="Proteomes" id="UP000006382">
    <property type="component" value="Chromosome"/>
</dbReference>
<dbReference type="GO" id="GO:0005737">
    <property type="term" value="C:cytoplasm"/>
    <property type="evidence" value="ECO:0007669"/>
    <property type="project" value="UniProtKB-SubCell"/>
</dbReference>
<dbReference type="GO" id="GO:0008760">
    <property type="term" value="F:UDP-N-acetylglucosamine 1-carboxyvinyltransferase activity"/>
    <property type="evidence" value="ECO:0007669"/>
    <property type="project" value="UniProtKB-UniRule"/>
</dbReference>
<dbReference type="GO" id="GO:0051301">
    <property type="term" value="P:cell division"/>
    <property type="evidence" value="ECO:0007669"/>
    <property type="project" value="UniProtKB-KW"/>
</dbReference>
<dbReference type="GO" id="GO:0071555">
    <property type="term" value="P:cell wall organization"/>
    <property type="evidence" value="ECO:0007669"/>
    <property type="project" value="UniProtKB-KW"/>
</dbReference>
<dbReference type="GO" id="GO:0009252">
    <property type="term" value="P:peptidoglycan biosynthetic process"/>
    <property type="evidence" value="ECO:0007669"/>
    <property type="project" value="UniProtKB-UniRule"/>
</dbReference>
<dbReference type="GO" id="GO:0008360">
    <property type="term" value="P:regulation of cell shape"/>
    <property type="evidence" value="ECO:0007669"/>
    <property type="project" value="UniProtKB-KW"/>
</dbReference>
<dbReference type="GO" id="GO:0019277">
    <property type="term" value="P:UDP-N-acetylgalactosamine biosynthetic process"/>
    <property type="evidence" value="ECO:0007669"/>
    <property type="project" value="InterPro"/>
</dbReference>
<dbReference type="CDD" id="cd01555">
    <property type="entry name" value="UdpNAET"/>
    <property type="match status" value="1"/>
</dbReference>
<dbReference type="FunFam" id="3.65.10.10:FF:000001">
    <property type="entry name" value="UDP-N-acetylglucosamine 1-carboxyvinyltransferase"/>
    <property type="match status" value="1"/>
</dbReference>
<dbReference type="Gene3D" id="3.65.10.10">
    <property type="entry name" value="Enolpyruvate transferase domain"/>
    <property type="match status" value="2"/>
</dbReference>
<dbReference type="HAMAP" id="MF_00111">
    <property type="entry name" value="MurA"/>
    <property type="match status" value="1"/>
</dbReference>
<dbReference type="InterPro" id="IPR001986">
    <property type="entry name" value="Enolpyruvate_Tfrase_dom"/>
</dbReference>
<dbReference type="InterPro" id="IPR036968">
    <property type="entry name" value="Enolpyruvate_Tfrase_sf"/>
</dbReference>
<dbReference type="InterPro" id="IPR050068">
    <property type="entry name" value="MurA_subfamily"/>
</dbReference>
<dbReference type="InterPro" id="IPR013792">
    <property type="entry name" value="RNA3'P_cycl/enolpyr_Trfase_a/b"/>
</dbReference>
<dbReference type="InterPro" id="IPR005750">
    <property type="entry name" value="UDP_GlcNAc_COvinyl_MurA"/>
</dbReference>
<dbReference type="NCBIfam" id="TIGR01072">
    <property type="entry name" value="murA"/>
    <property type="match status" value="1"/>
</dbReference>
<dbReference type="NCBIfam" id="NF006873">
    <property type="entry name" value="PRK09369.1"/>
    <property type="match status" value="1"/>
</dbReference>
<dbReference type="PANTHER" id="PTHR43783">
    <property type="entry name" value="UDP-N-ACETYLGLUCOSAMINE 1-CARBOXYVINYLTRANSFERASE"/>
    <property type="match status" value="1"/>
</dbReference>
<dbReference type="PANTHER" id="PTHR43783:SF1">
    <property type="entry name" value="UDP-N-ACETYLGLUCOSAMINE 1-CARBOXYVINYLTRANSFERASE"/>
    <property type="match status" value="1"/>
</dbReference>
<dbReference type="Pfam" id="PF00275">
    <property type="entry name" value="EPSP_synthase"/>
    <property type="match status" value="1"/>
</dbReference>
<dbReference type="SUPFAM" id="SSF55205">
    <property type="entry name" value="EPT/RTPC-like"/>
    <property type="match status" value="1"/>
</dbReference>
<name>MURA_ANADF</name>
<accession>A7HI47</accession>
<protein>
    <recommendedName>
        <fullName evidence="1">UDP-N-acetylglucosamine 1-carboxyvinyltransferase</fullName>
        <ecNumber evidence="1">2.5.1.7</ecNumber>
    </recommendedName>
    <alternativeName>
        <fullName evidence="1">Enoylpyruvate transferase</fullName>
    </alternativeName>
    <alternativeName>
        <fullName evidence="1">UDP-N-acetylglucosamine enolpyruvyl transferase</fullName>
        <shortName evidence="1">EPT</shortName>
    </alternativeName>
</protein>
<evidence type="ECO:0000255" key="1">
    <source>
        <dbReference type="HAMAP-Rule" id="MF_00111"/>
    </source>
</evidence>
<sequence>MDKIVIDGGVPLRGSVATSGAKNAALPIIAGALLAEGDHLVRNVPDLADVRTLGRLLVHMGCQAERNAGEKGALWIRVPAAVQPEAPYELVKTMRASVVVLGPLVARWGKARVSLPGGCAIGARPIDQHLKGLSALGAEIRLEHGYVEATAPRGRLRGATFTFDAQTVTGTENVMMAAALAEGETLLRNCAREPEIVDLAAALVRMGARISGAGADEIRIEGVETLRPLDHVVIADRIEAGTFLAAGALPGNDVTVQGCVLEHVEALVEKLRAAGAEVLPVDGGLRVVGDGRPRPVDVRTAPHPGFPTDMQAQMMALLCLADGSSKITETVFENRFMHVQELQRLGAEIAVDGKTAVVKGVPELSGAPVMASDLRASAALVLAGLAAQGTTEVHRVYHLDRGYERIEEKLAPLGARIRREKA</sequence>
<reference key="1">
    <citation type="journal article" date="2015" name="Genome Announc.">
        <title>Complete genome sequence of Anaeromyxobacter sp. Fw109-5, an anaerobic, metal-reducing bacterium isolated from a contaminated subsurface environment.</title>
        <authorList>
            <person name="Hwang C."/>
            <person name="Copeland A."/>
            <person name="Lucas S."/>
            <person name="Lapidus A."/>
            <person name="Barry K."/>
            <person name="Glavina Del Rio T."/>
            <person name="Dalin E."/>
            <person name="Tice H."/>
            <person name="Pitluck S."/>
            <person name="Sims D."/>
            <person name="Brettin T."/>
            <person name="Bruce D.C."/>
            <person name="Detter J.C."/>
            <person name="Han C.S."/>
            <person name="Schmutz J."/>
            <person name="Larimer F.W."/>
            <person name="Land M.L."/>
            <person name="Hauser L.J."/>
            <person name="Kyrpides N."/>
            <person name="Lykidis A."/>
            <person name="Richardson P."/>
            <person name="Belieav A."/>
            <person name="Sanford R.A."/>
            <person name="Loeffler F.E."/>
            <person name="Fields M.W."/>
        </authorList>
    </citation>
    <scope>NUCLEOTIDE SEQUENCE [LARGE SCALE GENOMIC DNA]</scope>
    <source>
        <strain>Fw109-5</strain>
    </source>
</reference>
<organism>
    <name type="scientific">Anaeromyxobacter sp. (strain Fw109-5)</name>
    <dbReference type="NCBI Taxonomy" id="404589"/>
    <lineage>
        <taxon>Bacteria</taxon>
        <taxon>Pseudomonadati</taxon>
        <taxon>Myxococcota</taxon>
        <taxon>Myxococcia</taxon>
        <taxon>Myxococcales</taxon>
        <taxon>Cystobacterineae</taxon>
        <taxon>Anaeromyxobacteraceae</taxon>
        <taxon>Anaeromyxobacter</taxon>
    </lineage>
</organism>
<comment type="function">
    <text evidence="1">Cell wall formation. Adds enolpyruvyl to UDP-N-acetylglucosamine.</text>
</comment>
<comment type="catalytic activity">
    <reaction evidence="1">
        <text>phosphoenolpyruvate + UDP-N-acetyl-alpha-D-glucosamine = UDP-N-acetyl-3-O-(1-carboxyvinyl)-alpha-D-glucosamine + phosphate</text>
        <dbReference type="Rhea" id="RHEA:18681"/>
        <dbReference type="ChEBI" id="CHEBI:43474"/>
        <dbReference type="ChEBI" id="CHEBI:57705"/>
        <dbReference type="ChEBI" id="CHEBI:58702"/>
        <dbReference type="ChEBI" id="CHEBI:68483"/>
        <dbReference type="EC" id="2.5.1.7"/>
    </reaction>
</comment>
<comment type="pathway">
    <text evidence="1">Cell wall biogenesis; peptidoglycan biosynthesis.</text>
</comment>
<comment type="subcellular location">
    <subcellularLocation>
        <location evidence="1">Cytoplasm</location>
    </subcellularLocation>
</comment>
<comment type="similarity">
    <text evidence="1">Belongs to the EPSP synthase family. MurA subfamily.</text>
</comment>
<proteinExistence type="inferred from homology"/>
<gene>
    <name evidence="1" type="primary">murA</name>
    <name type="ordered locus">Anae109_4215</name>
</gene>